<protein>
    <recommendedName>
        <fullName evidence="1">Chaperone modulatory protein CbpM</fullName>
    </recommendedName>
</protein>
<comment type="function">
    <text evidence="1">Interacts with CbpA and inhibits both the DnaJ-like co-chaperone activity and the DNA binding activity of CbpA. Together with CbpA, modulates the activity of the DnaK chaperone system. Does not inhibit the co-chaperone activity of DnaJ.</text>
</comment>
<comment type="similarity">
    <text evidence="1">Belongs to the CbpM family.</text>
</comment>
<accession>A7ZKA4</accession>
<organism>
    <name type="scientific">Escherichia coli O139:H28 (strain E24377A / ETEC)</name>
    <dbReference type="NCBI Taxonomy" id="331111"/>
    <lineage>
        <taxon>Bacteria</taxon>
        <taxon>Pseudomonadati</taxon>
        <taxon>Pseudomonadota</taxon>
        <taxon>Gammaproteobacteria</taxon>
        <taxon>Enterobacterales</taxon>
        <taxon>Enterobacteriaceae</taxon>
        <taxon>Escherichia</taxon>
    </lineage>
</organism>
<sequence length="101" mass="11512">MANVTVTFTITEFCLHTGISEEELNEIVGLGVVEPREIQETTWVFDDHAAIVVQRAVRLRHELALDWPGIAVALTLMDDIAHLKQENRLLRQRLSRFVAHP</sequence>
<dbReference type="EMBL" id="CP000800">
    <property type="protein sequence ID" value="ABV19830.1"/>
    <property type="molecule type" value="Genomic_DNA"/>
</dbReference>
<dbReference type="RefSeq" id="WP_000024560.1">
    <property type="nucleotide sequence ID" value="NC_009801.1"/>
</dbReference>
<dbReference type="SMR" id="A7ZKA4"/>
<dbReference type="GeneID" id="93776412"/>
<dbReference type="KEGG" id="ecw:EcE24377A_1117"/>
<dbReference type="HOGENOM" id="CLU_144710_3_1_6"/>
<dbReference type="Proteomes" id="UP000001122">
    <property type="component" value="Chromosome"/>
</dbReference>
<dbReference type="FunFam" id="1.10.1660.10:FF:000006">
    <property type="entry name" value="Chaperone modulatory protein CbpM"/>
    <property type="match status" value="1"/>
</dbReference>
<dbReference type="Gene3D" id="1.10.1660.10">
    <property type="match status" value="1"/>
</dbReference>
<dbReference type="HAMAP" id="MF_01155">
    <property type="entry name" value="CbpM"/>
    <property type="match status" value="1"/>
</dbReference>
<dbReference type="InterPro" id="IPR022835">
    <property type="entry name" value="CbpM"/>
</dbReference>
<dbReference type="NCBIfam" id="NF007617">
    <property type="entry name" value="PRK10265.1"/>
    <property type="match status" value="1"/>
</dbReference>
<dbReference type="Pfam" id="PF13591">
    <property type="entry name" value="MerR_2"/>
    <property type="match status" value="1"/>
</dbReference>
<proteinExistence type="inferred from homology"/>
<keyword id="KW-1185">Reference proteome</keyword>
<gene>
    <name evidence="1" type="primary">cbpM</name>
    <name type="ordered locus">EcE24377A_1117</name>
</gene>
<feature type="chain" id="PRO_1000065531" description="Chaperone modulatory protein CbpM">
    <location>
        <begin position="1"/>
        <end position="101"/>
    </location>
</feature>
<name>CBPM_ECO24</name>
<reference key="1">
    <citation type="journal article" date="2008" name="J. Bacteriol.">
        <title>The pangenome structure of Escherichia coli: comparative genomic analysis of E. coli commensal and pathogenic isolates.</title>
        <authorList>
            <person name="Rasko D.A."/>
            <person name="Rosovitz M.J."/>
            <person name="Myers G.S.A."/>
            <person name="Mongodin E.F."/>
            <person name="Fricke W.F."/>
            <person name="Gajer P."/>
            <person name="Crabtree J."/>
            <person name="Sebaihia M."/>
            <person name="Thomson N.R."/>
            <person name="Chaudhuri R."/>
            <person name="Henderson I.R."/>
            <person name="Sperandio V."/>
            <person name="Ravel J."/>
        </authorList>
    </citation>
    <scope>NUCLEOTIDE SEQUENCE [LARGE SCALE GENOMIC DNA]</scope>
    <source>
        <strain>E24377A / ETEC</strain>
    </source>
</reference>
<evidence type="ECO:0000255" key="1">
    <source>
        <dbReference type="HAMAP-Rule" id="MF_01155"/>
    </source>
</evidence>